<dbReference type="EMBL" id="M21088">
    <property type="protein sequence ID" value="AAA29074.1"/>
    <property type="molecule type" value="Genomic_DNA"/>
</dbReference>
<dbReference type="EMBL" id="M21004">
    <property type="protein sequence ID" value="AAA29075.1"/>
    <property type="molecule type" value="mRNA"/>
</dbReference>
<dbReference type="PIR" id="A54501">
    <property type="entry name" value="A54501"/>
</dbReference>
<dbReference type="VEuPathDB" id="ToxoDB:ETH2_1143600"/>
<dbReference type="VEuPathDB" id="ToxoDB:ETH_00010835"/>
<dbReference type="InterPro" id="IPR021288">
    <property type="entry name" value="Surface_antigen"/>
</dbReference>
<dbReference type="Pfam" id="PF11054">
    <property type="entry name" value="Surface_antigen"/>
    <property type="match status" value="1"/>
</dbReference>
<organism>
    <name type="scientific">Eimeria tenella</name>
    <name type="common">Coccidian parasite</name>
    <dbReference type="NCBI Taxonomy" id="5802"/>
    <lineage>
        <taxon>Eukaryota</taxon>
        <taxon>Sar</taxon>
        <taxon>Alveolata</taxon>
        <taxon>Apicomplexa</taxon>
        <taxon>Conoidasida</taxon>
        <taxon>Coccidia</taxon>
        <taxon>Eucoccidiorida</taxon>
        <taxon>Eimeriorina</taxon>
        <taxon>Eimeriidae</taxon>
        <taxon>Eimeria</taxon>
    </lineage>
</organism>
<keyword id="KW-0903">Direct protein sequencing</keyword>
<keyword id="KW-1015">Disulfide bond</keyword>
<keyword id="KW-0732">Signal</keyword>
<name>TA4_EIMTE</name>
<feature type="signal peptide">
    <location>
        <begin position="1"/>
        <end position="23"/>
    </location>
</feature>
<feature type="chain" id="PRO_0000022464" description="Sporulated oocyst TA4 antigen 17 kDa subunit">
    <location>
        <begin position="24"/>
        <end position="181"/>
    </location>
</feature>
<feature type="propeptide" id="PRO_0000022465" description="Removed in mature form">
    <location>
        <begin position="182"/>
        <end position="184"/>
    </location>
</feature>
<feature type="chain" id="PRO_0000022466" description="Sporulated oocyst TA4 antigen 8 kDa subunit">
    <location>
        <begin position="185"/>
        <end position="253"/>
    </location>
</feature>
<comment type="subunit">
    <text>The TA4 antigen is composed of a 17 kDa and a 8 kDa chain, linked by a disulfide bond.</text>
</comment>
<comment type="subcellular location">
    <text>Surface of sporozoites.</text>
</comment>
<comment type="developmental stage">
    <text>Expressed after initiation of oocyst sporulation.</text>
</comment>
<accession>P13399</accession>
<proteinExistence type="evidence at protein level"/>
<protein>
    <recommendedName>
        <fullName>Sporulated oocyst TA4 antigen</fullName>
    </recommendedName>
    <alternativeName>
        <fullName>Major sporozoite surface antigen</fullName>
    </alternativeName>
    <component>
        <recommendedName>
            <fullName>Sporulated oocyst TA4 antigen 17 kDa subunit</fullName>
        </recommendedName>
    </component>
    <component>
        <recommendedName>
            <fullName>Sporulated oocyst TA4 antigen 8 kDa subunit</fullName>
        </recommendedName>
    </component>
</protein>
<sequence>MARLSFVSLLSLSLLFGQQAVRAQDYPTAVTLDCKEAMNKLRKAAGLPAFEDAVGDTFVLPAYSHEESRAAPVAETLWKTEICPKVLGGGRSRNVTEAVKLTGNFAYYPVTDGKKECSDAVEYWKGGLSQFNDTIPPTFQALNDPVVYNDRAVSFVALYNPKTSPVVSCVLLQCPNAGVGGRRLAAGTTDAVICLTNPAPLEARSQPFDDEQWKKIVDSLSLSEEEEEKGGVSPVVPSVALISAAVISAFALF</sequence>
<reference key="1">
    <citation type="book" date="1987" name="Molecular strategies of parasitic invasion, UCLA symposia on molecular and cellular biology">
        <title>Identification and characterization of the gene for a major surface antigen of Eimeria tenella.</title>
        <editorList>
            <person name="Agabian N."/>
            <person name="Goodman H."/>
            <person name="Noguiera N."/>
        </editorList>
        <authorList>
            <person name="Files J.G."/>
            <person name="Paul L.S."/>
            <person name="Gabe J.D."/>
        </authorList>
    </citation>
    <scope>NUCLEOTIDE SEQUENCE [GENOMIC DNA]</scope>
</reference>
<reference key="2">
    <citation type="journal article" date="1988" name="Mol. Biochem. Parasitol.">
        <title>Characterization of a surface antigen of Eimeria tenella sporozoites and synthesis from a cloned cDNA in Escherichia coli.</title>
        <authorList>
            <person name="Brothers V.M."/>
            <person name="Kuhn I."/>
            <person name="Paul L.S."/>
            <person name="Gabe J.D."/>
            <person name="Andrews W.H."/>
            <person name="Sias S.R."/>
            <person name="McCaman M.T."/>
            <person name="Dragon E.A."/>
            <person name="Files J.G."/>
        </authorList>
    </citation>
    <scope>NUCLEOTIDE SEQUENCE [MRNA] OF 23-253</scope>
    <scope>PARTIAL PROTEIN SEQUENCE</scope>
    <source>
        <strain>27 / Salesbury laboratory</strain>
    </source>
</reference>